<name>RS17_ALBFT</name>
<organism>
    <name type="scientific">Albidiferax ferrireducens (strain ATCC BAA-621 / DSM 15236 / T118)</name>
    <name type="common">Rhodoferax ferrireducens</name>
    <dbReference type="NCBI Taxonomy" id="338969"/>
    <lineage>
        <taxon>Bacteria</taxon>
        <taxon>Pseudomonadati</taxon>
        <taxon>Pseudomonadota</taxon>
        <taxon>Betaproteobacteria</taxon>
        <taxon>Burkholderiales</taxon>
        <taxon>Comamonadaceae</taxon>
        <taxon>Rhodoferax</taxon>
    </lineage>
</organism>
<gene>
    <name evidence="1" type="primary">rpsQ</name>
    <name type="ordered locus">Rfer_3786</name>
</gene>
<protein>
    <recommendedName>
        <fullName evidence="1">Small ribosomal subunit protein uS17</fullName>
    </recommendedName>
    <alternativeName>
        <fullName evidence="2">30S ribosomal protein S17</fullName>
    </alternativeName>
</protein>
<evidence type="ECO:0000255" key="1">
    <source>
        <dbReference type="HAMAP-Rule" id="MF_01345"/>
    </source>
</evidence>
<evidence type="ECO:0000305" key="2"/>
<feature type="chain" id="PRO_0000255694" description="Small ribosomal subunit protein uS17">
    <location>
        <begin position="1"/>
        <end position="89"/>
    </location>
</feature>
<sequence>MTEAKKSLKRTLVGKVVSDKRAKTVTVLIERRVKHELYGKIVGKSSKYHAHDETGEYKLGDIIEITESRPISKTKNWVATRLVQKAAVV</sequence>
<proteinExistence type="inferred from homology"/>
<accession>Q21RW7</accession>
<keyword id="KW-1185">Reference proteome</keyword>
<keyword id="KW-0687">Ribonucleoprotein</keyword>
<keyword id="KW-0689">Ribosomal protein</keyword>
<keyword id="KW-0694">RNA-binding</keyword>
<keyword id="KW-0699">rRNA-binding</keyword>
<comment type="function">
    <text evidence="1">One of the primary rRNA binding proteins, it binds specifically to the 5'-end of 16S ribosomal RNA.</text>
</comment>
<comment type="subunit">
    <text evidence="1">Part of the 30S ribosomal subunit.</text>
</comment>
<comment type="similarity">
    <text evidence="1">Belongs to the universal ribosomal protein uS17 family.</text>
</comment>
<reference key="1">
    <citation type="submission" date="2006-02" db="EMBL/GenBank/DDBJ databases">
        <title>Complete sequence of chromosome of Rhodoferax ferrireducens DSM 15236.</title>
        <authorList>
            <person name="Copeland A."/>
            <person name="Lucas S."/>
            <person name="Lapidus A."/>
            <person name="Barry K."/>
            <person name="Detter J.C."/>
            <person name="Glavina del Rio T."/>
            <person name="Hammon N."/>
            <person name="Israni S."/>
            <person name="Pitluck S."/>
            <person name="Brettin T."/>
            <person name="Bruce D."/>
            <person name="Han C."/>
            <person name="Tapia R."/>
            <person name="Gilna P."/>
            <person name="Kiss H."/>
            <person name="Schmutz J."/>
            <person name="Larimer F."/>
            <person name="Land M."/>
            <person name="Kyrpides N."/>
            <person name="Ivanova N."/>
            <person name="Richardson P."/>
        </authorList>
    </citation>
    <scope>NUCLEOTIDE SEQUENCE [LARGE SCALE GENOMIC DNA]</scope>
    <source>
        <strain>ATCC BAA-621 / DSM 15236 / T118</strain>
    </source>
</reference>
<dbReference type="EMBL" id="CP000267">
    <property type="protein sequence ID" value="ABD71486.1"/>
    <property type="molecule type" value="Genomic_DNA"/>
</dbReference>
<dbReference type="RefSeq" id="WP_011466049.1">
    <property type="nucleotide sequence ID" value="NC_007908.1"/>
</dbReference>
<dbReference type="SMR" id="Q21RW7"/>
<dbReference type="STRING" id="338969.Rfer_3786"/>
<dbReference type="KEGG" id="rfr:Rfer_3786"/>
<dbReference type="eggNOG" id="COG0186">
    <property type="taxonomic scope" value="Bacteria"/>
</dbReference>
<dbReference type="HOGENOM" id="CLU_073626_1_1_4"/>
<dbReference type="OrthoDB" id="9811714at2"/>
<dbReference type="Proteomes" id="UP000008332">
    <property type="component" value="Chromosome"/>
</dbReference>
<dbReference type="GO" id="GO:0022627">
    <property type="term" value="C:cytosolic small ribosomal subunit"/>
    <property type="evidence" value="ECO:0007669"/>
    <property type="project" value="TreeGrafter"/>
</dbReference>
<dbReference type="GO" id="GO:0019843">
    <property type="term" value="F:rRNA binding"/>
    <property type="evidence" value="ECO:0007669"/>
    <property type="project" value="UniProtKB-UniRule"/>
</dbReference>
<dbReference type="GO" id="GO:0003735">
    <property type="term" value="F:structural constituent of ribosome"/>
    <property type="evidence" value="ECO:0007669"/>
    <property type="project" value="InterPro"/>
</dbReference>
<dbReference type="GO" id="GO:0006412">
    <property type="term" value="P:translation"/>
    <property type="evidence" value="ECO:0007669"/>
    <property type="project" value="UniProtKB-UniRule"/>
</dbReference>
<dbReference type="CDD" id="cd00364">
    <property type="entry name" value="Ribosomal_uS17"/>
    <property type="match status" value="1"/>
</dbReference>
<dbReference type="Gene3D" id="2.40.50.140">
    <property type="entry name" value="Nucleic acid-binding proteins"/>
    <property type="match status" value="1"/>
</dbReference>
<dbReference type="HAMAP" id="MF_01345_B">
    <property type="entry name" value="Ribosomal_uS17_B"/>
    <property type="match status" value="1"/>
</dbReference>
<dbReference type="InterPro" id="IPR012340">
    <property type="entry name" value="NA-bd_OB-fold"/>
</dbReference>
<dbReference type="InterPro" id="IPR000266">
    <property type="entry name" value="Ribosomal_uS17"/>
</dbReference>
<dbReference type="InterPro" id="IPR019984">
    <property type="entry name" value="Ribosomal_uS17_bact/chlr"/>
</dbReference>
<dbReference type="InterPro" id="IPR019979">
    <property type="entry name" value="Ribosomal_uS17_CS"/>
</dbReference>
<dbReference type="NCBIfam" id="NF004123">
    <property type="entry name" value="PRK05610.1"/>
    <property type="match status" value="1"/>
</dbReference>
<dbReference type="NCBIfam" id="TIGR03635">
    <property type="entry name" value="uS17_bact"/>
    <property type="match status" value="1"/>
</dbReference>
<dbReference type="PANTHER" id="PTHR10744">
    <property type="entry name" value="40S RIBOSOMAL PROTEIN S11 FAMILY MEMBER"/>
    <property type="match status" value="1"/>
</dbReference>
<dbReference type="PANTHER" id="PTHR10744:SF1">
    <property type="entry name" value="SMALL RIBOSOMAL SUBUNIT PROTEIN US17M"/>
    <property type="match status" value="1"/>
</dbReference>
<dbReference type="Pfam" id="PF00366">
    <property type="entry name" value="Ribosomal_S17"/>
    <property type="match status" value="1"/>
</dbReference>
<dbReference type="PRINTS" id="PR00973">
    <property type="entry name" value="RIBOSOMALS17"/>
</dbReference>
<dbReference type="SUPFAM" id="SSF50249">
    <property type="entry name" value="Nucleic acid-binding proteins"/>
    <property type="match status" value="1"/>
</dbReference>
<dbReference type="PROSITE" id="PS00056">
    <property type="entry name" value="RIBOSOMAL_S17"/>
    <property type="match status" value="1"/>
</dbReference>